<gene>
    <name evidence="1" type="primary">anmK</name>
    <name type="ordered locus">BSUIS_A0967</name>
</gene>
<accession>B0CLQ0</accession>
<organism>
    <name type="scientific">Brucella suis (strain ATCC 23445 / NCTC 10510)</name>
    <dbReference type="NCBI Taxonomy" id="470137"/>
    <lineage>
        <taxon>Bacteria</taxon>
        <taxon>Pseudomonadati</taxon>
        <taxon>Pseudomonadota</taxon>
        <taxon>Alphaproteobacteria</taxon>
        <taxon>Hyphomicrobiales</taxon>
        <taxon>Brucellaceae</taxon>
        <taxon>Brucella/Ochrobactrum group</taxon>
        <taxon>Brucella</taxon>
    </lineage>
</organism>
<reference key="1">
    <citation type="submission" date="2007-12" db="EMBL/GenBank/DDBJ databases">
        <title>Brucella suis ATCC 23445 whole genome shotgun sequencing project.</title>
        <authorList>
            <person name="Setubal J.C."/>
            <person name="Bowns C."/>
            <person name="Boyle S."/>
            <person name="Crasta O.R."/>
            <person name="Czar M.J."/>
            <person name="Dharmanolla C."/>
            <person name="Gillespie J.J."/>
            <person name="Kenyon R.W."/>
            <person name="Lu J."/>
            <person name="Mane S."/>
            <person name="Mohapatra S."/>
            <person name="Nagrani S."/>
            <person name="Purkayastha A."/>
            <person name="Rajasimha H.K."/>
            <person name="Shallom J.M."/>
            <person name="Shallom S."/>
            <person name="Shukla M."/>
            <person name="Snyder E.E."/>
            <person name="Sobral B.W."/>
            <person name="Wattam A.R."/>
            <person name="Will R."/>
            <person name="Williams K."/>
            <person name="Yoo H."/>
            <person name="Bruce D."/>
            <person name="Detter C."/>
            <person name="Munk C."/>
            <person name="Brettin T.S."/>
        </authorList>
    </citation>
    <scope>NUCLEOTIDE SEQUENCE [LARGE SCALE GENOMIC DNA]</scope>
    <source>
        <strain>ATCC 23445 / NCTC 10510</strain>
    </source>
</reference>
<sequence>MPDLKRAIGLMSGTSMDGIDIALLATDGENWIERRASASMDYSDGFRARLKAGLVDARAIKDRAERPGLLRQLEHDLTLLHAVAVHDFLHEQGLQPHQIDVIGFHGQTVLHRPNESLTVQIGDGALLARETGIPVVYDMRAEDMRHGGQGAPLIPAYHAALAANLPLGLKGPVVFVNIGGISNLTYVGEDGALIAYDSGPGNMLIDQWMELHGHGRFDPGGATAMSGSVDRNTAHRYLEHEFFKGNHRRSLDRGDFAIPAKGELNLADGARTLAFVSAAAILKSASHLPARPRTYVVSGGGRKNGALMDELTALAEREGAHVIDADNAGFDGDAMEAEAWAYLAVRSLCGLPLTYPSTTGCDKPVSGGVPVRP</sequence>
<name>ANMK_BRUSI</name>
<comment type="function">
    <text evidence="1">Catalyzes the specific phosphorylation of 1,6-anhydro-N-acetylmuramic acid (anhMurNAc) with the simultaneous cleavage of the 1,6-anhydro ring, generating MurNAc-6-P. Is required for the utilization of anhMurNAc either imported from the medium or derived from its own cell wall murein, and thus plays a role in cell wall recycling.</text>
</comment>
<comment type="catalytic activity">
    <reaction evidence="1">
        <text>1,6-anhydro-N-acetyl-beta-muramate + ATP + H2O = N-acetyl-D-muramate 6-phosphate + ADP + H(+)</text>
        <dbReference type="Rhea" id="RHEA:24952"/>
        <dbReference type="ChEBI" id="CHEBI:15377"/>
        <dbReference type="ChEBI" id="CHEBI:15378"/>
        <dbReference type="ChEBI" id="CHEBI:30616"/>
        <dbReference type="ChEBI" id="CHEBI:58690"/>
        <dbReference type="ChEBI" id="CHEBI:58722"/>
        <dbReference type="ChEBI" id="CHEBI:456216"/>
        <dbReference type="EC" id="2.7.1.170"/>
    </reaction>
</comment>
<comment type="pathway">
    <text evidence="1">Amino-sugar metabolism; 1,6-anhydro-N-acetylmuramate degradation.</text>
</comment>
<comment type="pathway">
    <text evidence="1">Cell wall biogenesis; peptidoglycan recycling.</text>
</comment>
<comment type="similarity">
    <text evidence="1">Belongs to the anhydro-N-acetylmuramic acid kinase family.</text>
</comment>
<protein>
    <recommendedName>
        <fullName evidence="1">Anhydro-N-acetylmuramic acid kinase</fullName>
        <ecNumber evidence="1">2.7.1.170</ecNumber>
    </recommendedName>
    <alternativeName>
        <fullName evidence="1">AnhMurNAc kinase</fullName>
    </alternativeName>
</protein>
<proteinExistence type="inferred from homology"/>
<dbReference type="EC" id="2.7.1.170" evidence="1"/>
<dbReference type="EMBL" id="CP000911">
    <property type="protein sequence ID" value="ABY38030.1"/>
    <property type="molecule type" value="Genomic_DNA"/>
</dbReference>
<dbReference type="RefSeq" id="WP_006072659.1">
    <property type="nucleotide sequence ID" value="NC_010169.1"/>
</dbReference>
<dbReference type="SMR" id="B0CLQ0"/>
<dbReference type="KEGG" id="bmt:BSUIS_A0967"/>
<dbReference type="HOGENOM" id="CLU_038782_3_0_5"/>
<dbReference type="UniPathway" id="UPA00343"/>
<dbReference type="UniPathway" id="UPA00544"/>
<dbReference type="Proteomes" id="UP000008545">
    <property type="component" value="Chromosome I"/>
</dbReference>
<dbReference type="GO" id="GO:0005524">
    <property type="term" value="F:ATP binding"/>
    <property type="evidence" value="ECO:0007669"/>
    <property type="project" value="UniProtKB-UniRule"/>
</dbReference>
<dbReference type="GO" id="GO:0016301">
    <property type="term" value="F:kinase activity"/>
    <property type="evidence" value="ECO:0007669"/>
    <property type="project" value="UniProtKB-KW"/>
</dbReference>
<dbReference type="GO" id="GO:0016773">
    <property type="term" value="F:phosphotransferase activity, alcohol group as acceptor"/>
    <property type="evidence" value="ECO:0007669"/>
    <property type="project" value="UniProtKB-UniRule"/>
</dbReference>
<dbReference type="GO" id="GO:0097175">
    <property type="term" value="P:1,6-anhydro-N-acetyl-beta-muramic acid catabolic process"/>
    <property type="evidence" value="ECO:0007669"/>
    <property type="project" value="UniProtKB-UniRule"/>
</dbReference>
<dbReference type="GO" id="GO:0006040">
    <property type="term" value="P:amino sugar metabolic process"/>
    <property type="evidence" value="ECO:0007669"/>
    <property type="project" value="InterPro"/>
</dbReference>
<dbReference type="GO" id="GO:0009254">
    <property type="term" value="P:peptidoglycan turnover"/>
    <property type="evidence" value="ECO:0007669"/>
    <property type="project" value="UniProtKB-UniRule"/>
</dbReference>
<dbReference type="Gene3D" id="3.30.420.40">
    <property type="match status" value="2"/>
</dbReference>
<dbReference type="HAMAP" id="MF_01270">
    <property type="entry name" value="AnhMurNAc_kinase"/>
    <property type="match status" value="1"/>
</dbReference>
<dbReference type="InterPro" id="IPR005338">
    <property type="entry name" value="Anhydro_N_Ac-Mur_kinase"/>
</dbReference>
<dbReference type="InterPro" id="IPR043129">
    <property type="entry name" value="ATPase_NBD"/>
</dbReference>
<dbReference type="NCBIfam" id="NF007141">
    <property type="entry name" value="PRK09585.1-5"/>
    <property type="match status" value="1"/>
</dbReference>
<dbReference type="PANTHER" id="PTHR30605">
    <property type="entry name" value="ANHYDRO-N-ACETYLMURAMIC ACID KINASE"/>
    <property type="match status" value="1"/>
</dbReference>
<dbReference type="PANTHER" id="PTHR30605:SF0">
    <property type="entry name" value="ANHYDRO-N-ACETYLMURAMIC ACID KINASE"/>
    <property type="match status" value="1"/>
</dbReference>
<dbReference type="Pfam" id="PF03702">
    <property type="entry name" value="AnmK"/>
    <property type="match status" value="1"/>
</dbReference>
<dbReference type="SUPFAM" id="SSF53067">
    <property type="entry name" value="Actin-like ATPase domain"/>
    <property type="match status" value="1"/>
</dbReference>
<evidence type="ECO:0000255" key="1">
    <source>
        <dbReference type="HAMAP-Rule" id="MF_01270"/>
    </source>
</evidence>
<feature type="chain" id="PRO_1000085831" description="Anhydro-N-acetylmuramic acid kinase">
    <location>
        <begin position="1"/>
        <end position="373"/>
    </location>
</feature>
<feature type="binding site" evidence="1">
    <location>
        <begin position="13"/>
        <end position="20"/>
    </location>
    <ligand>
        <name>ATP</name>
        <dbReference type="ChEBI" id="CHEBI:30616"/>
    </ligand>
</feature>
<keyword id="KW-0067">ATP-binding</keyword>
<keyword id="KW-0119">Carbohydrate metabolism</keyword>
<keyword id="KW-0418">Kinase</keyword>
<keyword id="KW-0547">Nucleotide-binding</keyword>
<keyword id="KW-0808">Transferase</keyword>